<evidence type="ECO:0000255" key="1">
    <source>
        <dbReference type="HAMAP-Rule" id="MF_01209"/>
    </source>
</evidence>
<organism>
    <name type="scientific">Streptococcus pyogenes serotype M18 (strain MGAS8232)</name>
    <dbReference type="NCBI Taxonomy" id="186103"/>
    <lineage>
        <taxon>Bacteria</taxon>
        <taxon>Bacillati</taxon>
        <taxon>Bacillota</taxon>
        <taxon>Bacilli</taxon>
        <taxon>Lactobacillales</taxon>
        <taxon>Streptococcaceae</taxon>
        <taxon>Streptococcus</taxon>
    </lineage>
</organism>
<reference key="1">
    <citation type="journal article" date="2002" name="Proc. Natl. Acad. Sci. U.S.A.">
        <title>Genome sequence and comparative microarray analysis of serotype M18 group A Streptococcus strains associated with acute rheumatic fever outbreaks.</title>
        <authorList>
            <person name="Smoot J.C."/>
            <person name="Barbian K.D."/>
            <person name="Van Gompel J.J."/>
            <person name="Smoot L.M."/>
            <person name="Chaussee M.S."/>
            <person name="Sylva G.L."/>
            <person name="Sturdevant D.E."/>
            <person name="Ricklefs S.M."/>
            <person name="Porcella S.F."/>
            <person name="Parkins L.D."/>
            <person name="Beres S.B."/>
            <person name="Campbell D.S."/>
            <person name="Smith T.M."/>
            <person name="Zhang Q."/>
            <person name="Kapur V."/>
            <person name="Daly J.A."/>
            <person name="Veasy L.G."/>
            <person name="Musser J.M."/>
        </authorList>
    </citation>
    <scope>NUCLEOTIDE SEQUENCE [LARGE SCALE GENOMIC DNA]</scope>
    <source>
        <strain>MGAS8232</strain>
    </source>
</reference>
<accession>P58894</accession>
<gene>
    <name evidence="1" type="primary">carA</name>
    <name type="ordered locus">spyM18_0893</name>
</gene>
<feature type="chain" id="PRO_0000112335" description="Carbamoyl phosphate synthase small chain">
    <location>
        <begin position="1"/>
        <end position="360"/>
    </location>
</feature>
<feature type="domain" description="Glutamine amidotransferase type-1" evidence="1">
    <location>
        <begin position="172"/>
        <end position="358"/>
    </location>
</feature>
<feature type="region of interest" description="CPSase" evidence="1">
    <location>
        <begin position="1"/>
        <end position="169"/>
    </location>
</feature>
<feature type="active site" description="Nucleophile" evidence="1">
    <location>
        <position position="247"/>
    </location>
</feature>
<feature type="active site" evidence="1">
    <location>
        <position position="331"/>
    </location>
</feature>
<feature type="active site" evidence="1">
    <location>
        <position position="333"/>
    </location>
</feature>
<feature type="binding site" evidence="1">
    <location>
        <position position="46"/>
    </location>
    <ligand>
        <name>L-glutamine</name>
        <dbReference type="ChEBI" id="CHEBI:58359"/>
    </ligand>
</feature>
<feature type="binding site" evidence="1">
    <location>
        <position position="220"/>
    </location>
    <ligand>
        <name>L-glutamine</name>
        <dbReference type="ChEBI" id="CHEBI:58359"/>
    </ligand>
</feature>
<feature type="binding site" evidence="1">
    <location>
        <position position="222"/>
    </location>
    <ligand>
        <name>L-glutamine</name>
        <dbReference type="ChEBI" id="CHEBI:58359"/>
    </ligand>
</feature>
<feature type="binding site" evidence="1">
    <location>
        <position position="248"/>
    </location>
    <ligand>
        <name>L-glutamine</name>
        <dbReference type="ChEBI" id="CHEBI:58359"/>
    </ligand>
</feature>
<feature type="binding site" evidence="1">
    <location>
        <position position="251"/>
    </location>
    <ligand>
        <name>L-glutamine</name>
        <dbReference type="ChEBI" id="CHEBI:58359"/>
    </ligand>
</feature>
<feature type="binding site" evidence="1">
    <location>
        <position position="289"/>
    </location>
    <ligand>
        <name>L-glutamine</name>
        <dbReference type="ChEBI" id="CHEBI:58359"/>
    </ligand>
</feature>
<feature type="binding site" evidence="1">
    <location>
        <position position="291"/>
    </location>
    <ligand>
        <name>L-glutamine</name>
        <dbReference type="ChEBI" id="CHEBI:58359"/>
    </ligand>
</feature>
<feature type="binding site" evidence="1">
    <location>
        <position position="292"/>
    </location>
    <ligand>
        <name>L-glutamine</name>
        <dbReference type="ChEBI" id="CHEBI:58359"/>
    </ligand>
</feature>
<protein>
    <recommendedName>
        <fullName evidence="1">Carbamoyl phosphate synthase small chain</fullName>
        <ecNumber evidence="1">6.3.5.5</ecNumber>
    </recommendedName>
    <alternativeName>
        <fullName evidence="1">Carbamoyl phosphate synthetase glutamine chain</fullName>
    </alternativeName>
</protein>
<name>CARA_STRP8</name>
<sequence>MTKRLLILEDGTIFEGEPFGADIDVTGEIVFNTGMTGYQESITDQSYNGQILTFTYPLIGNYGINRDDYESISPTCKGVVVSEVSRLASNWRKQMTLDAFLKIKGIPGISGIDTRALTKIIRQHGTMKATMADDGDSIQHLKDQLRATVLPTNTIEQVSTKTAYPAPGIGKNIVLVDFGLKHSILREFSKRQCNITVVPFNITAEEVFQLNPDGLMLSNGPGNPEDLPEALDMIRGVQGKIPIFGICMGHQLFSLANGAKTCKMTFGHRGFNHAVREIATGRIDFTSQNHGYAVERSSLPDTLMVTHEDINDKTVEGVKHRDFPAFSVQFHPDAAPGPHDASYLFDEFLEMIDSWRCTSK</sequence>
<comment type="function">
    <text evidence="1">Small subunit of the glutamine-dependent carbamoyl phosphate synthetase (CPSase). CPSase catalyzes the formation of carbamoyl phosphate from the ammonia moiety of glutamine, carbonate, and phosphate donated by ATP, constituting the first step of 2 biosynthetic pathways, one leading to arginine and/or urea and the other to pyrimidine nucleotides. The small subunit (glutamine amidotransferase) binds and cleaves glutamine to supply the large subunit with the substrate ammonia.</text>
</comment>
<comment type="catalytic activity">
    <reaction evidence="1">
        <text>hydrogencarbonate + L-glutamine + 2 ATP + H2O = carbamoyl phosphate + L-glutamate + 2 ADP + phosphate + 2 H(+)</text>
        <dbReference type="Rhea" id="RHEA:18633"/>
        <dbReference type="ChEBI" id="CHEBI:15377"/>
        <dbReference type="ChEBI" id="CHEBI:15378"/>
        <dbReference type="ChEBI" id="CHEBI:17544"/>
        <dbReference type="ChEBI" id="CHEBI:29985"/>
        <dbReference type="ChEBI" id="CHEBI:30616"/>
        <dbReference type="ChEBI" id="CHEBI:43474"/>
        <dbReference type="ChEBI" id="CHEBI:58228"/>
        <dbReference type="ChEBI" id="CHEBI:58359"/>
        <dbReference type="ChEBI" id="CHEBI:456216"/>
        <dbReference type="EC" id="6.3.5.5"/>
    </reaction>
</comment>
<comment type="catalytic activity">
    <molecule>Carbamoyl phosphate synthase small chain</molecule>
    <reaction evidence="1">
        <text>L-glutamine + H2O = L-glutamate + NH4(+)</text>
        <dbReference type="Rhea" id="RHEA:15889"/>
        <dbReference type="ChEBI" id="CHEBI:15377"/>
        <dbReference type="ChEBI" id="CHEBI:28938"/>
        <dbReference type="ChEBI" id="CHEBI:29985"/>
        <dbReference type="ChEBI" id="CHEBI:58359"/>
    </reaction>
</comment>
<comment type="pathway">
    <text evidence="1">Amino-acid biosynthesis; L-arginine biosynthesis; carbamoyl phosphate from bicarbonate: step 1/1.</text>
</comment>
<comment type="pathway">
    <text evidence="1">Pyrimidine metabolism; UMP biosynthesis via de novo pathway; (S)-dihydroorotate from bicarbonate: step 1/3.</text>
</comment>
<comment type="subunit">
    <text evidence="1">Composed of two chains; the small (or glutamine) chain promotes the hydrolysis of glutamine to ammonia, which is used by the large (or ammonia) chain to synthesize carbamoyl phosphate. Tetramer of heterodimers (alpha,beta)4.</text>
</comment>
<comment type="similarity">
    <text evidence="1">Belongs to the CarA family.</text>
</comment>
<dbReference type="EC" id="6.3.5.5" evidence="1"/>
<dbReference type="EMBL" id="AE009949">
    <property type="protein sequence ID" value="AAL97545.1"/>
    <property type="molecule type" value="Genomic_DNA"/>
</dbReference>
<dbReference type="RefSeq" id="WP_011017651.1">
    <property type="nucleotide sequence ID" value="NC_003485.1"/>
</dbReference>
<dbReference type="SMR" id="P58894"/>
<dbReference type="KEGG" id="spm:spyM18_0893"/>
<dbReference type="HOGENOM" id="CLU_035901_2_1_9"/>
<dbReference type="UniPathway" id="UPA00068">
    <property type="reaction ID" value="UER00171"/>
</dbReference>
<dbReference type="UniPathway" id="UPA00070">
    <property type="reaction ID" value="UER00115"/>
</dbReference>
<dbReference type="GO" id="GO:0005524">
    <property type="term" value="F:ATP binding"/>
    <property type="evidence" value="ECO:0007669"/>
    <property type="project" value="UniProtKB-UniRule"/>
</dbReference>
<dbReference type="GO" id="GO:0004088">
    <property type="term" value="F:carbamoyl-phosphate synthase (glutamine-hydrolyzing) activity"/>
    <property type="evidence" value="ECO:0007669"/>
    <property type="project" value="UniProtKB-UniRule"/>
</dbReference>
<dbReference type="GO" id="GO:0004359">
    <property type="term" value="F:glutaminase activity"/>
    <property type="evidence" value="ECO:0007669"/>
    <property type="project" value="RHEA"/>
</dbReference>
<dbReference type="GO" id="GO:0006207">
    <property type="term" value="P:'de novo' pyrimidine nucleobase biosynthetic process"/>
    <property type="evidence" value="ECO:0007669"/>
    <property type="project" value="InterPro"/>
</dbReference>
<dbReference type="GO" id="GO:0044205">
    <property type="term" value="P:'de novo' UMP biosynthetic process"/>
    <property type="evidence" value="ECO:0007669"/>
    <property type="project" value="UniProtKB-UniRule"/>
</dbReference>
<dbReference type="GO" id="GO:0006541">
    <property type="term" value="P:glutamine metabolic process"/>
    <property type="evidence" value="ECO:0007669"/>
    <property type="project" value="InterPro"/>
</dbReference>
<dbReference type="GO" id="GO:0006526">
    <property type="term" value="P:L-arginine biosynthetic process"/>
    <property type="evidence" value="ECO:0007669"/>
    <property type="project" value="UniProtKB-UniRule"/>
</dbReference>
<dbReference type="CDD" id="cd01744">
    <property type="entry name" value="GATase1_CPSase"/>
    <property type="match status" value="1"/>
</dbReference>
<dbReference type="FunFam" id="3.40.50.880:FF:000029">
    <property type="entry name" value="Carbamoyl-phosphate synthase small chain"/>
    <property type="match status" value="1"/>
</dbReference>
<dbReference type="FunFam" id="3.50.30.20:FF:000001">
    <property type="entry name" value="Carbamoyl-phosphate synthase small chain"/>
    <property type="match status" value="1"/>
</dbReference>
<dbReference type="Gene3D" id="3.40.50.880">
    <property type="match status" value="1"/>
</dbReference>
<dbReference type="Gene3D" id="3.50.30.20">
    <property type="entry name" value="Carbamoyl-phosphate synthase small subunit, N-terminal domain"/>
    <property type="match status" value="1"/>
</dbReference>
<dbReference type="HAMAP" id="MF_01209">
    <property type="entry name" value="CPSase_S_chain"/>
    <property type="match status" value="1"/>
</dbReference>
<dbReference type="InterPro" id="IPR050472">
    <property type="entry name" value="Anth_synth/Amidotransfase"/>
</dbReference>
<dbReference type="InterPro" id="IPR006274">
    <property type="entry name" value="CarbamoylP_synth_ssu"/>
</dbReference>
<dbReference type="InterPro" id="IPR002474">
    <property type="entry name" value="CarbamoylP_synth_ssu_N"/>
</dbReference>
<dbReference type="InterPro" id="IPR036480">
    <property type="entry name" value="CarbP_synth_ssu_N_sf"/>
</dbReference>
<dbReference type="InterPro" id="IPR029062">
    <property type="entry name" value="Class_I_gatase-like"/>
</dbReference>
<dbReference type="InterPro" id="IPR035686">
    <property type="entry name" value="CPSase_GATase1"/>
</dbReference>
<dbReference type="InterPro" id="IPR017926">
    <property type="entry name" value="GATASE"/>
</dbReference>
<dbReference type="NCBIfam" id="TIGR01368">
    <property type="entry name" value="CPSaseIIsmall"/>
    <property type="match status" value="1"/>
</dbReference>
<dbReference type="NCBIfam" id="NF009475">
    <property type="entry name" value="PRK12838.1"/>
    <property type="match status" value="1"/>
</dbReference>
<dbReference type="PANTHER" id="PTHR43418:SF7">
    <property type="entry name" value="CARBAMOYL-PHOSPHATE SYNTHASE SMALL CHAIN"/>
    <property type="match status" value="1"/>
</dbReference>
<dbReference type="PANTHER" id="PTHR43418">
    <property type="entry name" value="MULTIFUNCTIONAL TRYPTOPHAN BIOSYNTHESIS PROTEIN-RELATED"/>
    <property type="match status" value="1"/>
</dbReference>
<dbReference type="Pfam" id="PF00988">
    <property type="entry name" value="CPSase_sm_chain"/>
    <property type="match status" value="1"/>
</dbReference>
<dbReference type="Pfam" id="PF00117">
    <property type="entry name" value="GATase"/>
    <property type="match status" value="1"/>
</dbReference>
<dbReference type="PRINTS" id="PR00097">
    <property type="entry name" value="ANTSNTHASEII"/>
</dbReference>
<dbReference type="PRINTS" id="PR00099">
    <property type="entry name" value="CPSGATASE"/>
</dbReference>
<dbReference type="PRINTS" id="PR00096">
    <property type="entry name" value="GATASE"/>
</dbReference>
<dbReference type="SMART" id="SM01097">
    <property type="entry name" value="CPSase_sm_chain"/>
    <property type="match status" value="1"/>
</dbReference>
<dbReference type="SUPFAM" id="SSF52021">
    <property type="entry name" value="Carbamoyl phosphate synthetase, small subunit N-terminal domain"/>
    <property type="match status" value="1"/>
</dbReference>
<dbReference type="SUPFAM" id="SSF52317">
    <property type="entry name" value="Class I glutamine amidotransferase-like"/>
    <property type="match status" value="1"/>
</dbReference>
<dbReference type="PROSITE" id="PS51273">
    <property type="entry name" value="GATASE_TYPE_1"/>
    <property type="match status" value="1"/>
</dbReference>
<keyword id="KW-0028">Amino-acid biosynthesis</keyword>
<keyword id="KW-0055">Arginine biosynthesis</keyword>
<keyword id="KW-0067">ATP-binding</keyword>
<keyword id="KW-0315">Glutamine amidotransferase</keyword>
<keyword id="KW-0436">Ligase</keyword>
<keyword id="KW-0547">Nucleotide-binding</keyword>
<keyword id="KW-0665">Pyrimidine biosynthesis</keyword>
<proteinExistence type="inferred from homology"/>